<dbReference type="EMBL" id="CP001120">
    <property type="protein sequence ID" value="ACF70335.1"/>
    <property type="molecule type" value="Genomic_DNA"/>
</dbReference>
<dbReference type="RefSeq" id="WP_000529945.1">
    <property type="nucleotide sequence ID" value="NC_011083.1"/>
</dbReference>
<dbReference type="SMR" id="B4TKK9"/>
<dbReference type="GeneID" id="97603663"/>
<dbReference type="KEGG" id="seh:SeHA_C3738"/>
<dbReference type="HOGENOM" id="CLU_058591_0_2_6"/>
<dbReference type="Proteomes" id="UP000001866">
    <property type="component" value="Chromosome"/>
</dbReference>
<dbReference type="GO" id="GO:0022627">
    <property type="term" value="C:cytosolic small ribosomal subunit"/>
    <property type="evidence" value="ECO:0007669"/>
    <property type="project" value="TreeGrafter"/>
</dbReference>
<dbReference type="GO" id="GO:0003729">
    <property type="term" value="F:mRNA binding"/>
    <property type="evidence" value="ECO:0007669"/>
    <property type="project" value="UniProtKB-UniRule"/>
</dbReference>
<dbReference type="GO" id="GO:0019843">
    <property type="term" value="F:rRNA binding"/>
    <property type="evidence" value="ECO:0007669"/>
    <property type="project" value="UniProtKB-UniRule"/>
</dbReference>
<dbReference type="GO" id="GO:0003735">
    <property type="term" value="F:structural constituent of ribosome"/>
    <property type="evidence" value="ECO:0007669"/>
    <property type="project" value="InterPro"/>
</dbReference>
<dbReference type="GO" id="GO:0006412">
    <property type="term" value="P:translation"/>
    <property type="evidence" value="ECO:0007669"/>
    <property type="project" value="UniProtKB-UniRule"/>
</dbReference>
<dbReference type="CDD" id="cd02412">
    <property type="entry name" value="KH-II_30S_S3"/>
    <property type="match status" value="1"/>
</dbReference>
<dbReference type="FunFam" id="3.30.1140.32:FF:000001">
    <property type="entry name" value="30S ribosomal protein S3"/>
    <property type="match status" value="1"/>
</dbReference>
<dbReference type="FunFam" id="3.30.300.20:FF:000001">
    <property type="entry name" value="30S ribosomal protein S3"/>
    <property type="match status" value="1"/>
</dbReference>
<dbReference type="Gene3D" id="3.30.300.20">
    <property type="match status" value="1"/>
</dbReference>
<dbReference type="Gene3D" id="3.30.1140.32">
    <property type="entry name" value="Ribosomal protein S3, C-terminal domain"/>
    <property type="match status" value="1"/>
</dbReference>
<dbReference type="HAMAP" id="MF_01309_B">
    <property type="entry name" value="Ribosomal_uS3_B"/>
    <property type="match status" value="1"/>
</dbReference>
<dbReference type="InterPro" id="IPR004087">
    <property type="entry name" value="KH_dom"/>
</dbReference>
<dbReference type="InterPro" id="IPR015946">
    <property type="entry name" value="KH_dom-like_a/b"/>
</dbReference>
<dbReference type="InterPro" id="IPR004044">
    <property type="entry name" value="KH_dom_type_2"/>
</dbReference>
<dbReference type="InterPro" id="IPR009019">
    <property type="entry name" value="KH_sf_prok-type"/>
</dbReference>
<dbReference type="InterPro" id="IPR036419">
    <property type="entry name" value="Ribosomal_S3_C_sf"/>
</dbReference>
<dbReference type="InterPro" id="IPR005704">
    <property type="entry name" value="Ribosomal_uS3_bac-typ"/>
</dbReference>
<dbReference type="InterPro" id="IPR001351">
    <property type="entry name" value="Ribosomal_uS3_C"/>
</dbReference>
<dbReference type="InterPro" id="IPR018280">
    <property type="entry name" value="Ribosomal_uS3_CS"/>
</dbReference>
<dbReference type="NCBIfam" id="TIGR01009">
    <property type="entry name" value="rpsC_bact"/>
    <property type="match status" value="1"/>
</dbReference>
<dbReference type="PANTHER" id="PTHR11760">
    <property type="entry name" value="30S/40S RIBOSOMAL PROTEIN S3"/>
    <property type="match status" value="1"/>
</dbReference>
<dbReference type="PANTHER" id="PTHR11760:SF19">
    <property type="entry name" value="SMALL RIBOSOMAL SUBUNIT PROTEIN US3C"/>
    <property type="match status" value="1"/>
</dbReference>
<dbReference type="Pfam" id="PF07650">
    <property type="entry name" value="KH_2"/>
    <property type="match status" value="1"/>
</dbReference>
<dbReference type="Pfam" id="PF00189">
    <property type="entry name" value="Ribosomal_S3_C"/>
    <property type="match status" value="1"/>
</dbReference>
<dbReference type="SMART" id="SM00322">
    <property type="entry name" value="KH"/>
    <property type="match status" value="1"/>
</dbReference>
<dbReference type="SUPFAM" id="SSF54814">
    <property type="entry name" value="Prokaryotic type KH domain (KH-domain type II)"/>
    <property type="match status" value="1"/>
</dbReference>
<dbReference type="SUPFAM" id="SSF54821">
    <property type="entry name" value="Ribosomal protein S3 C-terminal domain"/>
    <property type="match status" value="1"/>
</dbReference>
<dbReference type="PROSITE" id="PS50823">
    <property type="entry name" value="KH_TYPE_2"/>
    <property type="match status" value="1"/>
</dbReference>
<dbReference type="PROSITE" id="PS00548">
    <property type="entry name" value="RIBOSOMAL_S3"/>
    <property type="match status" value="1"/>
</dbReference>
<accession>B4TKK9</accession>
<organism>
    <name type="scientific">Salmonella heidelberg (strain SL476)</name>
    <dbReference type="NCBI Taxonomy" id="454169"/>
    <lineage>
        <taxon>Bacteria</taxon>
        <taxon>Pseudomonadati</taxon>
        <taxon>Pseudomonadota</taxon>
        <taxon>Gammaproteobacteria</taxon>
        <taxon>Enterobacterales</taxon>
        <taxon>Enterobacteriaceae</taxon>
        <taxon>Salmonella</taxon>
    </lineage>
</organism>
<proteinExistence type="inferred from homology"/>
<reference key="1">
    <citation type="journal article" date="2011" name="J. Bacteriol.">
        <title>Comparative genomics of 28 Salmonella enterica isolates: evidence for CRISPR-mediated adaptive sublineage evolution.</title>
        <authorList>
            <person name="Fricke W.F."/>
            <person name="Mammel M.K."/>
            <person name="McDermott P.F."/>
            <person name="Tartera C."/>
            <person name="White D.G."/>
            <person name="Leclerc J.E."/>
            <person name="Ravel J."/>
            <person name="Cebula T.A."/>
        </authorList>
    </citation>
    <scope>NUCLEOTIDE SEQUENCE [LARGE SCALE GENOMIC DNA]</scope>
    <source>
        <strain>SL476</strain>
    </source>
</reference>
<protein>
    <recommendedName>
        <fullName evidence="1">Small ribosomal subunit protein uS3</fullName>
    </recommendedName>
    <alternativeName>
        <fullName evidence="2">30S ribosomal protein S3</fullName>
    </alternativeName>
</protein>
<comment type="function">
    <text evidence="1">Binds the lower part of the 30S subunit head. Binds mRNA in the 70S ribosome, positioning it for translation.</text>
</comment>
<comment type="subunit">
    <text evidence="1">Part of the 30S ribosomal subunit. Forms a tight complex with proteins S10 and S14.</text>
</comment>
<comment type="similarity">
    <text evidence="1">Belongs to the universal ribosomal protein uS3 family.</text>
</comment>
<keyword id="KW-0687">Ribonucleoprotein</keyword>
<keyword id="KW-0689">Ribosomal protein</keyword>
<keyword id="KW-0694">RNA-binding</keyword>
<keyword id="KW-0699">rRNA-binding</keyword>
<evidence type="ECO:0000255" key="1">
    <source>
        <dbReference type="HAMAP-Rule" id="MF_01309"/>
    </source>
</evidence>
<evidence type="ECO:0000305" key="2"/>
<feature type="chain" id="PRO_1000141014" description="Small ribosomal subunit protein uS3">
    <location>
        <begin position="1"/>
        <end position="233"/>
    </location>
</feature>
<feature type="domain" description="KH type-2" evidence="1">
    <location>
        <begin position="39"/>
        <end position="107"/>
    </location>
</feature>
<gene>
    <name evidence="1" type="primary">rpsC</name>
    <name type="ordered locus">SeHA_C3738</name>
</gene>
<sequence>MGQKVHPNGIRLGIVKPWNSTWFANTKEFADNLDSDFKVRQYLTKELAKASVSRIVIERPAKSIRVTIHTARPGIVIGKKGEDVEKLRKVVADIAGVPAQINIAEVRKPELDAKLVADSITSQLERRVMFRRAMKRAVQNAMRLGAKGIKVEVSGRLGGAEIARTEWYREGRVPLHTLRADIDYNTSEAHTTYGVIGVKVWIFKGEILGGMAAVEQPEKPAAQPKKQQRKGRK</sequence>
<name>RS3_SALHS</name>